<accession>A0A0S4FKT4</accession>
<accession>C0HJR5</accession>
<comment type="function">
    <text evidence="4 5 6 7">Thrombin-like snake venom serine protease (PubMed:26227411, PubMed:31131001, PubMed:34506860). Releases fibrinopeptide A and B in the conversion of fibrinogen to fibrin, with preferential activity on the alpha chain of fibrinogen (PubMed:26227411, PubMed:34506860). Also hydrolyzes N-p-toluensulfonyl arginine ester (TAME) and chromogenic artificial substrates of the blood coagulation cascade: S-2222 for factor Xa, S-2302 for kallikrein and S-2238 for thrombin (PubMed:26227411). When tested in vitro, the recombinant protein does not degrade blood clots, suggesting that this toxin lacks fibrinolytic activity (PubMed:31131001). In addition, it moderately inhibits human Kv10.1/KCNH1/EAG1 currents, with a mechanism independent of its enzymatic activity. It selectively blocks Kv10.1/KCNH1/EAG1 in a time and dose-dependent manner (IC(50)=4.2 uM for native protein and IC(50)=2.5 uM for recombinant protein). It may have a preference in interacting with Kv10.1/KCNH1/EAG1 in its closed state, since the inhibitory effect of the toxin is decreased at more depolarized potentials. Corroboratively, it may have possible antitumor applications, since it reduces the viability of human breast cancer cell line MCF-7, which strongly expresses Kv10.1/KCNH1/EAG1, but does not affect the liver carcinoma and the non-tumorigenic epithelial breast cell lines, which weakly express Kv10.1/KCNH1/EAG1 (PubMed:32161292). When tested on peripheral blood mononuclear cells (PBMC), the native protein shows mild cytotoxicity, whereas the recombinant protein does not show any cytotoxicity (PubMed:34506860). Native form is not immununogenic, since it does not induce statistically significant antibody production in mice, whereas recombinant form shows an antibody titer slightly higher than the native form (PubMed:34506860). In vivo, subplantar injection in mice paw induces a discreet paw edema (PubMed:31131001). In addition, intraperitoneal injection of the recombinant protein into mice led to fibrinogen depletion, resulting in the blood incoagulability (PubMed:31131001).</text>
</comment>
<comment type="activity regulation">
    <text evidence="4">Inhibited by Cu(2+) and, to a lesser extent, by Zn(2+) and Ba(2+). Not inhibited by Ca(2+) and Mg(2+).</text>
</comment>
<comment type="biophysicochemical properties">
    <kinetics>
        <KM evidence="4">1.43 mM for TAME</KM>
        <KM evidence="7">0.92 mM for S-2302</KM>
        <Vmax evidence="4">0.06 mmol/min/ug enzyme towards TAME</Vmax>
    </kinetics>
    <phDependence>
        <text evidence="4">Activity is stable from pH 3.5 and 10.5.</text>
    </phDependence>
    <temperatureDependence>
        <text evidence="4">Thermostable. Activity is stable after incubation at 100 degrees Celsius for 30 minutes.</text>
    </temperatureDependence>
</comment>
<comment type="subunit">
    <text evidence="10">Monomer.</text>
</comment>
<comment type="subcellular location">
    <subcellularLocation>
        <location evidence="4">Secreted</location>
    </subcellularLocation>
</comment>
<comment type="tissue specificity">
    <text evidence="10">Expressed by the venom gland.</text>
</comment>
<comment type="mass spectrometry"/>
<comment type="miscellaneous">
    <text evidence="6">Negative results: recombinant protein has no activity on many tested channels (Shaker IR, Kv1.4/KCNA4, Kv2.1/KCNB1, hKv11.1/KCNH2/ERG1, rNav1.1/SCN1A, rNav1.2/SCN2A, rNav1.3/SCN3A, rNav1.4/SCN4A, hNav1.5/SCN5A, mNav1.6/SCN8A, hNav1.8/SCN10A).</text>
</comment>
<comment type="miscellaneous">
    <text evidence="7">PEGylation of both native and recombinant forms increases 5-6-fold hERG1 inhibition (IC(50)=22.4 uM for PEG-collinein-1 and IC(50)=10.0 uM for PEGrCollinein-1). In contrast, PEGylated proteins displays a great loss in the capability of inhibiting Kv10.1/KCNH1/EAG1, compared to their non-PEGylated counterparts (PubMed:34506860). It is noteworthy that PEGylated proteins have no activity towards all other channels tested (rKv1.1/KCNA1, rKv1.2/KCNA2, rKv1.4/KCNA4, rKv1.6/KCNA6, hKv2.1/KCNB1, hKv3.1/KCNC1, rKv4.2/KCND2, hKv7.2/7.3, hEAG1, Shaker, rNav1.1/SCN1A, rNav1.2/SCN2A, rNav1.3/SCN3A, rNav1.4/SCN4A, hNav1.5/SCN5A, mNav1.6/SCN8A, hNav1.8/SCN10A, rCav3.1/CACNA1G and rCav3.3/CACNA1I) (PubMed:34506860). Both native and recombinant PEGylated forms are also not immununogenic, since they do not induce statistically significant antibody production in mice (PubMed:34506860).</text>
</comment>
<comment type="similarity">
    <text evidence="2">Belongs to the peptidase S1 family. Snake venom subfamily.</text>
</comment>
<name>VSP1_CRODO</name>
<organism evidence="12">
    <name type="scientific">Crotalus durissus collilineatus</name>
    <name type="common">Brazilian rattlesnake</name>
    <dbReference type="NCBI Taxonomy" id="221569"/>
    <lineage>
        <taxon>Eukaryota</taxon>
        <taxon>Metazoa</taxon>
        <taxon>Chordata</taxon>
        <taxon>Craniata</taxon>
        <taxon>Vertebrata</taxon>
        <taxon>Euteleostomi</taxon>
        <taxon>Lepidosauria</taxon>
        <taxon>Squamata</taxon>
        <taxon>Bifurcata</taxon>
        <taxon>Unidentata</taxon>
        <taxon>Episquamata</taxon>
        <taxon>Toxicofera</taxon>
        <taxon>Serpentes</taxon>
        <taxon>Colubroidea</taxon>
        <taxon>Viperidae</taxon>
        <taxon>Crotalinae</taxon>
        <taxon>Crotalus</taxon>
    </lineage>
</organism>
<proteinExistence type="evidence at protein level"/>
<dbReference type="EC" id="3.4.21.-" evidence="3 4"/>
<dbReference type="EMBL" id="LN651356">
    <property type="protein sequence ID" value="CEJ25501.1"/>
    <property type="molecule type" value="mRNA"/>
</dbReference>
<dbReference type="SMR" id="A0A0S4FKT4"/>
<dbReference type="SABIO-RK" id="A0A0S4FKT4"/>
<dbReference type="GO" id="GO:0005615">
    <property type="term" value="C:extracellular space"/>
    <property type="evidence" value="ECO:0007669"/>
    <property type="project" value="TreeGrafter"/>
</dbReference>
<dbReference type="GO" id="GO:0015459">
    <property type="term" value="F:potassium channel regulator activity"/>
    <property type="evidence" value="ECO:0007669"/>
    <property type="project" value="UniProtKB-KW"/>
</dbReference>
<dbReference type="GO" id="GO:0004252">
    <property type="term" value="F:serine-type endopeptidase activity"/>
    <property type="evidence" value="ECO:0007669"/>
    <property type="project" value="InterPro"/>
</dbReference>
<dbReference type="GO" id="GO:0090729">
    <property type="term" value="F:toxin activity"/>
    <property type="evidence" value="ECO:0007669"/>
    <property type="project" value="UniProtKB-KW"/>
</dbReference>
<dbReference type="GO" id="GO:0006508">
    <property type="term" value="P:proteolysis"/>
    <property type="evidence" value="ECO:0007669"/>
    <property type="project" value="UniProtKB-KW"/>
</dbReference>
<dbReference type="CDD" id="cd00190">
    <property type="entry name" value="Tryp_SPc"/>
    <property type="match status" value="1"/>
</dbReference>
<dbReference type="FunFam" id="2.40.10.10:FF:000158">
    <property type="entry name" value="Thrombin-like enzyme saxthrombin"/>
    <property type="match status" value="1"/>
</dbReference>
<dbReference type="Gene3D" id="2.40.10.10">
    <property type="entry name" value="Trypsin-like serine proteases"/>
    <property type="match status" value="2"/>
</dbReference>
<dbReference type="InterPro" id="IPR009003">
    <property type="entry name" value="Peptidase_S1_PA"/>
</dbReference>
<dbReference type="InterPro" id="IPR043504">
    <property type="entry name" value="Peptidase_S1_PA_chymotrypsin"/>
</dbReference>
<dbReference type="InterPro" id="IPR001314">
    <property type="entry name" value="Peptidase_S1A"/>
</dbReference>
<dbReference type="InterPro" id="IPR050127">
    <property type="entry name" value="Serine_Proteases_S1"/>
</dbReference>
<dbReference type="InterPro" id="IPR001254">
    <property type="entry name" value="Trypsin_dom"/>
</dbReference>
<dbReference type="InterPro" id="IPR018114">
    <property type="entry name" value="TRYPSIN_HIS"/>
</dbReference>
<dbReference type="PANTHER" id="PTHR24264:SF15">
    <property type="entry name" value="RIKEN CDNA 2210010C04 GENE"/>
    <property type="match status" value="1"/>
</dbReference>
<dbReference type="PANTHER" id="PTHR24264">
    <property type="entry name" value="TRYPSIN-RELATED"/>
    <property type="match status" value="1"/>
</dbReference>
<dbReference type="Pfam" id="PF00089">
    <property type="entry name" value="Trypsin"/>
    <property type="match status" value="1"/>
</dbReference>
<dbReference type="PRINTS" id="PR00722">
    <property type="entry name" value="CHYMOTRYPSIN"/>
</dbReference>
<dbReference type="SMART" id="SM00020">
    <property type="entry name" value="Tryp_SPc"/>
    <property type="match status" value="1"/>
</dbReference>
<dbReference type="SUPFAM" id="SSF50494">
    <property type="entry name" value="Trypsin-like serine proteases"/>
    <property type="match status" value="1"/>
</dbReference>
<dbReference type="PROSITE" id="PS50240">
    <property type="entry name" value="TRYPSIN_DOM"/>
    <property type="match status" value="1"/>
</dbReference>
<dbReference type="PROSITE" id="PS00134">
    <property type="entry name" value="TRYPSIN_HIS"/>
    <property type="match status" value="1"/>
</dbReference>
<sequence>VIGGDECNINEHNFLVALYEYWSQSFLCGGTLINGEWVLTAAHCDRKHILIYVGVHDRSVQFDKEQRRFPKEKYFFNCRNNFTKWDKDIMLIRLNKPVSYSEHIAPLSLPSSPPIVGSVCRVMGWGTIKSPQETLPDVPHCANINLLDYEVCRTAHPQFRLPATIRILCAGVLEGGIDTCHRDSGGPLICNGEFQGIVSWGDGSCAQPDKPALYSKVFDHLDWIQNIIAGSETVNCPS</sequence>
<protein>
    <recommendedName>
        <fullName evidence="8">Thrombin-like enzyme collinein-1</fullName>
        <shortName evidence="8">SVTLE collinein-1</shortName>
        <ecNumber evidence="3 4">3.4.21.-</ecNumber>
    </recommendedName>
    <alternativeName>
        <fullName evidence="1">Fibrinogen-clotting enzyme</fullName>
    </alternativeName>
    <alternativeName>
        <fullName evidence="8">Snake venom serine protease</fullName>
        <shortName evidence="8">SVSP</shortName>
    </alternativeName>
</protein>
<evidence type="ECO:0000250" key="1">
    <source>
        <dbReference type="UniProtKB" id="Q9PSN3"/>
    </source>
</evidence>
<evidence type="ECO:0000255" key="2"/>
<evidence type="ECO:0000255" key="3">
    <source>
        <dbReference type="PROSITE-ProRule" id="PRU00274"/>
    </source>
</evidence>
<evidence type="ECO:0000269" key="4">
    <source>
    </source>
</evidence>
<evidence type="ECO:0000269" key="5">
    <source>
    </source>
</evidence>
<evidence type="ECO:0000269" key="6">
    <source>
    </source>
</evidence>
<evidence type="ECO:0000269" key="7">
    <source>
    </source>
</evidence>
<evidence type="ECO:0000303" key="8">
    <source>
    </source>
</evidence>
<evidence type="ECO:0000305" key="9"/>
<evidence type="ECO:0000305" key="10">
    <source>
    </source>
</evidence>
<evidence type="ECO:0000305" key="11">
    <source>
    </source>
</evidence>
<evidence type="ECO:0000312" key="12">
    <source>
        <dbReference type="EMBL" id="CEJ25501.1"/>
    </source>
</evidence>
<feature type="chain" id="PRO_0000436478" description="Thrombin-like enzyme collinein-1" evidence="9">
    <location>
        <begin position="1"/>
        <end position="238"/>
    </location>
</feature>
<feature type="domain" description="Peptidase S1" evidence="3">
    <location>
        <begin position="1"/>
        <end position="229"/>
    </location>
</feature>
<feature type="active site" description="Charge relay system" evidence="3">
    <location>
        <position position="43"/>
    </location>
</feature>
<feature type="active site" description="Charge relay system" evidence="3">
    <location>
        <position position="88"/>
    </location>
</feature>
<feature type="active site" description="Charge relay system" evidence="3">
    <location>
        <position position="184"/>
    </location>
</feature>
<feature type="site" description="Pharmacophore that directly interacts to Kv10.1/KCNH1/EAG1 channel selectivity filter" evidence="11">
    <location>
        <position position="79"/>
    </location>
</feature>
<feature type="disulfide bond" evidence="1">
    <location>
        <begin position="7"/>
        <end position="141"/>
    </location>
</feature>
<feature type="disulfide bond" evidence="1 3">
    <location>
        <begin position="28"/>
        <end position="44"/>
    </location>
</feature>
<feature type="disulfide bond" evidence="1">
    <location>
        <begin position="78"/>
        <end position="236"/>
    </location>
</feature>
<feature type="disulfide bond" evidence="1 3">
    <location>
        <begin position="120"/>
        <end position="190"/>
    </location>
</feature>
<feature type="disulfide bond" evidence="1 3">
    <location>
        <begin position="152"/>
        <end position="169"/>
    </location>
</feature>
<feature type="disulfide bond" evidence="1 3">
    <location>
        <begin position="180"/>
        <end position="205"/>
    </location>
</feature>
<feature type="mutagenesis site" description="No change in inhibition potency of Kv10.1/KCNH1/EAG1." evidence="6">
    <original>H</original>
    <variation>R</variation>
    <location>
        <position position="43"/>
    </location>
</feature>
<keyword id="KW-1204">Blood coagulation cascade activating toxin</keyword>
<keyword id="KW-0903">Direct protein sequencing</keyword>
<keyword id="KW-1015">Disulfide bond</keyword>
<keyword id="KW-1199">Hemostasis impairing toxin</keyword>
<keyword id="KW-0378">Hydrolase</keyword>
<keyword id="KW-0872">Ion channel impairing toxin</keyword>
<keyword id="KW-0632">Potassium channel impairing toxin</keyword>
<keyword id="KW-0645">Protease</keyword>
<keyword id="KW-0964">Secreted</keyword>
<keyword id="KW-0720">Serine protease</keyword>
<keyword id="KW-0800">Toxin</keyword>
<keyword id="KW-1220">Voltage-gated potassium channel impairing toxin</keyword>
<reference key="1">
    <citation type="journal article" date="2015" name="Appl. Microbiol. Biotechnol.">
        <title>Expression of a new serine protease from Crotalus durissus collilineatus venom in Pichia pastoris and functional comparison with the native enzyme.</title>
        <authorList>
            <person name="Boldrini-Franca J."/>
            <person name="Santos Rodrigues R."/>
            <person name="Santos-Silva L.K."/>
            <person name="de Souza D.L."/>
            <person name="Gomes M.S."/>
            <person name="Cologna C.T."/>
            <person name="de Pauw E."/>
            <person name="Quinton L."/>
            <person name="Henrique-Silva F."/>
            <person name="de Melo Rodrigues V."/>
            <person name="Arantes E.C."/>
        </authorList>
    </citation>
    <scope>NUCLEOTIDE SEQUENCE [MRNA]</scope>
    <scope>PARTIAL PROTEIN SEQUENCE</scope>
    <scope>FUNCTION</scope>
    <scope>ACTIVITY REGULATION</scope>
    <scope>BIOPHYSICOCHEMICAL PROPERTIES</scope>
    <scope>SUBCELLULAR LOCATION</scope>
    <scope>MASS SPECTROMETRY</scope>
    <scope>IDENTIFICATION BY MASS SPECTROMETRY</scope>
    <source>
        <tissue>Venom</tissue>
        <tissue>Venom gland</tissue>
    </source>
</reference>
<reference key="2">
    <citation type="journal article" date="2019" name="J. Venom. Anim. Toxins Incl. Trop. Dis.">
        <title>Functional and biological insights of rCollinein-1, a recombinant serine protease from Crotalus durissus collilineatus.</title>
        <authorList>
            <person name="Boldrini-Franca J."/>
            <person name="Pinheiro-Junior E.L."/>
            <person name="Arantes E.C."/>
        </authorList>
    </citation>
    <scope>FUNCTION</scope>
    <scope>RECOMBINANT EXPRESSION</scope>
</reference>
<reference key="3">
    <citation type="journal article" date="2020" name="Sci. Rep.">
        <title>Beyond hemostasis: a snake venom serine protease with potassium channel blocking and potential antitumor activities.</title>
        <authorList>
            <person name="Boldrini-Franca J."/>
            <person name="Pinheiro-Junior E.L."/>
            <person name="Peigneur S."/>
            <person name="Pucca M.B."/>
            <person name="Cerni F.A."/>
            <person name="Borges R.J."/>
            <person name="Costa T.R."/>
            <person name="Carone S.E.I."/>
            <person name="Fontes M.R.M."/>
            <person name="Sampaio S.V."/>
            <person name="Arantes E.C."/>
            <person name="Tytgat J."/>
        </authorList>
    </citation>
    <scope>FUNCTION</scope>
    <scope>MUTAGENESIS OF HIS-43</scope>
    <scope>RECOMBINANT EXPRESSION</scope>
    <scope>IN SILICO MOLECULAR DOCKING</scope>
    <scope>3D-STRUCTURE MODELING</scope>
    <source>
        <tissue>Venom</tissue>
    </source>
</reference>
<reference key="4">
    <citation type="journal article" date="2021" name="Int. J. Biol. Macromol.">
        <title>Towards toxin PEGylation: the example of rCollinein-1, a snake venom thrombin-like enzyme, as a PEGylated biopharmaceutical prototype.</title>
        <authorList>
            <person name="Pinheiro-Junior E.L."/>
            <person name="Boldrini-Franca J."/>
            <person name="Takeda A.A.S."/>
            <person name="Costa T.R."/>
            <person name="Peigneur S."/>
            <person name="Cardoso I.A."/>
            <person name="Oliveira I.S."/>
            <person name="Sampaio S.V."/>
            <person name="de Mattos Fontes M.R."/>
            <person name="Tytgat J."/>
            <person name="Arantes E.C."/>
        </authorList>
    </citation>
    <scope>FUNCTION</scope>
    <scope>MASS SPECTROMETRY</scope>
    <scope>RECOMBINANT EXPRESSION</scope>
    <scope>PEGYLATION OF NATIVE AND RECOMBINANT FORMS</scope>
    <scope>3D-STRUCTURE MODELING</scope>
    <source>
        <tissue>Venom</tissue>
    </source>
</reference>